<accession>Q8NV47</accession>
<proteinExistence type="inferred from homology"/>
<gene>
    <name type="primary">hrtA</name>
    <name type="ordered locus">MW2280</name>
</gene>
<name>HRTA_STAAW</name>
<dbReference type="EC" id="7.6.2.-"/>
<dbReference type="EMBL" id="BA000033">
    <property type="protein sequence ID" value="BAB96145.1"/>
    <property type="molecule type" value="Genomic_DNA"/>
</dbReference>
<dbReference type="RefSeq" id="WP_001229911.1">
    <property type="nucleotide sequence ID" value="NC_003923.1"/>
</dbReference>
<dbReference type="SMR" id="Q8NV47"/>
<dbReference type="KEGG" id="sam:MW2280"/>
<dbReference type="HOGENOM" id="CLU_000604_1_22_9"/>
<dbReference type="GO" id="GO:0005886">
    <property type="term" value="C:plasma membrane"/>
    <property type="evidence" value="ECO:0007669"/>
    <property type="project" value="UniProtKB-SubCell"/>
</dbReference>
<dbReference type="GO" id="GO:0005524">
    <property type="term" value="F:ATP binding"/>
    <property type="evidence" value="ECO:0007669"/>
    <property type="project" value="UniProtKB-KW"/>
</dbReference>
<dbReference type="GO" id="GO:0016887">
    <property type="term" value="F:ATP hydrolysis activity"/>
    <property type="evidence" value="ECO:0007669"/>
    <property type="project" value="InterPro"/>
</dbReference>
<dbReference type="GO" id="GO:0022857">
    <property type="term" value="F:transmembrane transporter activity"/>
    <property type="evidence" value="ECO:0007669"/>
    <property type="project" value="TreeGrafter"/>
</dbReference>
<dbReference type="CDD" id="cd03255">
    <property type="entry name" value="ABC_MJ0796_LolCDE_FtsE"/>
    <property type="match status" value="1"/>
</dbReference>
<dbReference type="FunFam" id="3.40.50.300:FF:000032">
    <property type="entry name" value="Export ABC transporter ATP-binding protein"/>
    <property type="match status" value="1"/>
</dbReference>
<dbReference type="Gene3D" id="3.40.50.300">
    <property type="entry name" value="P-loop containing nucleotide triphosphate hydrolases"/>
    <property type="match status" value="1"/>
</dbReference>
<dbReference type="InterPro" id="IPR003593">
    <property type="entry name" value="AAA+_ATPase"/>
</dbReference>
<dbReference type="InterPro" id="IPR003439">
    <property type="entry name" value="ABC_transporter-like_ATP-bd"/>
</dbReference>
<dbReference type="InterPro" id="IPR015854">
    <property type="entry name" value="ABC_transpr_LolD-like"/>
</dbReference>
<dbReference type="InterPro" id="IPR017911">
    <property type="entry name" value="MacB-like_ATP-bd"/>
</dbReference>
<dbReference type="InterPro" id="IPR027417">
    <property type="entry name" value="P-loop_NTPase"/>
</dbReference>
<dbReference type="PANTHER" id="PTHR24220:SF666">
    <property type="entry name" value="HEMIN IMPORT ATP-BINDING PROTEIN HRTA-RELATED"/>
    <property type="match status" value="1"/>
</dbReference>
<dbReference type="PANTHER" id="PTHR24220">
    <property type="entry name" value="IMPORT ATP-BINDING PROTEIN"/>
    <property type="match status" value="1"/>
</dbReference>
<dbReference type="Pfam" id="PF00005">
    <property type="entry name" value="ABC_tran"/>
    <property type="match status" value="1"/>
</dbReference>
<dbReference type="SMART" id="SM00382">
    <property type="entry name" value="AAA"/>
    <property type="match status" value="1"/>
</dbReference>
<dbReference type="SUPFAM" id="SSF52540">
    <property type="entry name" value="P-loop containing nucleoside triphosphate hydrolases"/>
    <property type="match status" value="1"/>
</dbReference>
<dbReference type="PROSITE" id="PS50893">
    <property type="entry name" value="ABC_TRANSPORTER_2"/>
    <property type="match status" value="1"/>
</dbReference>
<keyword id="KW-0067">ATP-binding</keyword>
<keyword id="KW-1003">Cell membrane</keyword>
<keyword id="KW-0472">Membrane</keyword>
<keyword id="KW-0547">Nucleotide-binding</keyword>
<keyword id="KW-1278">Translocase</keyword>
<keyword id="KW-0813">Transport</keyword>
<organism>
    <name type="scientific">Staphylococcus aureus (strain MW2)</name>
    <dbReference type="NCBI Taxonomy" id="196620"/>
    <lineage>
        <taxon>Bacteria</taxon>
        <taxon>Bacillati</taxon>
        <taxon>Bacillota</taxon>
        <taxon>Bacilli</taxon>
        <taxon>Bacillales</taxon>
        <taxon>Staphylococcaceae</taxon>
        <taxon>Staphylococcus</taxon>
    </lineage>
</organism>
<feature type="chain" id="PRO_0000270133" description="Putative hemin import ATP-binding protein HrtA">
    <location>
        <begin position="1"/>
        <end position="221"/>
    </location>
</feature>
<feature type="domain" description="ABC transporter" evidence="2">
    <location>
        <begin position="3"/>
        <end position="221"/>
    </location>
</feature>
<feature type="binding site" evidence="2">
    <location>
        <begin position="39"/>
        <end position="46"/>
    </location>
    <ligand>
        <name>ATP</name>
        <dbReference type="ChEBI" id="CHEBI:30616"/>
    </ligand>
</feature>
<evidence type="ECO:0000250" key="1"/>
<evidence type="ECO:0000255" key="2">
    <source>
        <dbReference type="PROSITE-ProRule" id="PRU00434"/>
    </source>
</evidence>
<evidence type="ECO:0000305" key="3"/>
<reference key="1">
    <citation type="journal article" date="2002" name="Lancet">
        <title>Genome and virulence determinants of high virulence community-acquired MRSA.</title>
        <authorList>
            <person name="Baba T."/>
            <person name="Takeuchi F."/>
            <person name="Kuroda M."/>
            <person name="Yuzawa H."/>
            <person name="Aoki K."/>
            <person name="Oguchi A."/>
            <person name="Nagai Y."/>
            <person name="Iwama N."/>
            <person name="Asano K."/>
            <person name="Naimi T."/>
            <person name="Kuroda H."/>
            <person name="Cui L."/>
            <person name="Yamamoto K."/>
            <person name="Hiramatsu K."/>
        </authorList>
    </citation>
    <scope>NUCLEOTIDE SEQUENCE [LARGE SCALE GENOMIC DNA]</scope>
    <source>
        <strain>MW2</strain>
    </source>
</reference>
<protein>
    <recommendedName>
        <fullName>Putative hemin import ATP-binding protein HrtA</fullName>
        <ecNumber>7.6.2.-</ecNumber>
    </recommendedName>
</protein>
<sequence>MALVVEDIVKNFGEGLSETKVLKGINFEVEQGEFVILNGASGSGKTTLLTILGGLLSQTSGTVLYNDAPLFDKQHRPSDLRLEDIGFIFQSSHLVPYLKVIEQLTLVGQEAGMTKQQSSTRAIQLLKNIGLEDRLNVYPHQLSGGEKQRVAIMRAFMNNPKIILADEPTASLDADRATKVVEMIRQQIKEQQMIGIMITHDRRLFEYADRVIELEDGKITD</sequence>
<comment type="function">
    <text evidence="1">Part of the ABC transporter complex hrt involved in hemin import. Responsible for energy coupling to the transport system (By similarity).</text>
</comment>
<comment type="subunit">
    <text evidence="1">The complex is composed of two ATP-binding proteins (HrtA), two transmembrane proteins (HrtB) and a solute-binding protein.</text>
</comment>
<comment type="subcellular location">
    <subcellularLocation>
        <location evidence="3">Cell membrane</location>
        <topology evidence="3">Peripheral membrane protein</topology>
    </subcellularLocation>
</comment>
<comment type="similarity">
    <text evidence="3">Belongs to the ABC transporter superfamily. HrtA family.</text>
</comment>